<proteinExistence type="inferred from homology"/>
<sequence>MKPLHLKLNNFGPFLKEEIDFSKIDNNELFLISGKTGSGKTMIFDAMTYALFGKASTEQREENDLRSHFADGKQPMSVTFEFQLNHRIYKVHRQGPYIKEGNTTKTNAKFDVFEMVDGKYEIRESKVISGTQFIIELLGVNADQFRQLFILPQGEFKRFLISNSREKQGILRTLFDSEKFEAIREILKEEVKKEKAQIENRYQQIDLLWQEIESFDDDNIKGLLEVATQQIDKLIENIPLLQARSKEILASVNESKETAIKEFEIIEKKTLENNILKDNINQLNKNKIDFVQLKEQQPEIEGIEAKLKLLQDITNLLNYIENREKIETKIANSKKDISKTNNKILNLDCDKRNIDKEKKMLEENGDLIESKISFIDKTRVLFNDINKYQQSYLNIERLRTEGEQLGDELNDLIKGLETVEDSIGNNQSDYEKIIELNNTITNINNEINIIKENEKAKAELDKLLGSKQELENQINEETSILKNLEIKLDRYDKTKLDLNDKESFISEIKSAVNIGDQCPICGNEIQDLGHHIDFDSIAKRQNEIKEIEANIHAIKSNIAVHNSEIKFVNEKISNINIKTQSDFSLEVLNKRLLENENALNNQRDLNKFIEQMKEEKDNLTLQIHNKQLRLNKNESELKLCRDLITEFETLSKYNNITNFEVDYKKYVQDVNQHQELSKEIEDKLMQLSQRKLIEQNNLNHYENQLETYNNDLELNEQSIEMEMSRLNLTDDNDIDEIIAWRGEQEELEQKRDTYKKRYHEFEMEIARLESLTKDKELLDSDKLKDEYELKKGKMNTLIDEYSAVHYQCQNNINKTQSIVSHINYLNQELKDQQEIFQLAEIVSGKNNKNLTLENFVLIYYLDQIIAQANLRLATMSDNRYQLIRREAVSHGLSGLEIDVFDLHSNKSRHISSLSGGETFQSSLALALGLSEIVQQQSGGISLESIFIDEGFGTLDQETLETALDTLLNLKSTGRMVGIISHVSELKNRIPLVLEVKSDQYQSSTRFKRN</sequence>
<feature type="chain" id="PRO_0000338461" description="Nuclease SbcCD subunit C">
    <location>
        <begin position="1"/>
        <end position="1009"/>
    </location>
</feature>
<feature type="coiled-coil region" evidence="2">
    <location>
        <begin position="176"/>
        <end position="364"/>
    </location>
</feature>
<feature type="coiled-coil region" evidence="2">
    <location>
        <begin position="392"/>
        <end position="502"/>
    </location>
</feature>
<feature type="coiled-coil region" evidence="2">
    <location>
        <begin position="535"/>
        <end position="802"/>
    </location>
</feature>
<feature type="binding site" evidence="2">
    <location>
        <begin position="34"/>
        <end position="41"/>
    </location>
    <ligand>
        <name>ATP</name>
        <dbReference type="ChEBI" id="CHEBI:30616"/>
    </ligand>
</feature>
<name>SBCC_STAAC</name>
<comment type="function">
    <text evidence="1">SbcCD cleaves DNA hairpin structures. These structures can inhibit DNA replication and are intermediates in certain DNA recombination reactions. The complex acts as a 3'-&gt;5' double strand exonuclease that can open hairpins. It also has a 5' single-strand endonuclease activity (By similarity).</text>
</comment>
<comment type="subunit">
    <text evidence="1">Heterodimer of SbcC and SbcD.</text>
</comment>
<comment type="similarity">
    <text evidence="3">Belongs to the SMC family. SbcC subfamily.</text>
</comment>
<reference key="1">
    <citation type="journal article" date="2005" name="J. Bacteriol.">
        <title>Insights on evolution of virulence and resistance from the complete genome analysis of an early methicillin-resistant Staphylococcus aureus strain and a biofilm-producing methicillin-resistant Staphylococcus epidermidis strain.</title>
        <authorList>
            <person name="Gill S.R."/>
            <person name="Fouts D.E."/>
            <person name="Archer G.L."/>
            <person name="Mongodin E.F."/>
            <person name="DeBoy R.T."/>
            <person name="Ravel J."/>
            <person name="Paulsen I.T."/>
            <person name="Kolonay J.F."/>
            <person name="Brinkac L.M."/>
            <person name="Beanan M.J."/>
            <person name="Dodson R.J."/>
            <person name="Daugherty S.C."/>
            <person name="Madupu R."/>
            <person name="Angiuoli S.V."/>
            <person name="Durkin A.S."/>
            <person name="Haft D.H."/>
            <person name="Vamathevan J.J."/>
            <person name="Khouri H."/>
            <person name="Utterback T.R."/>
            <person name="Lee C."/>
            <person name="Dimitrov G."/>
            <person name="Jiang L."/>
            <person name="Qin H."/>
            <person name="Weidman J."/>
            <person name="Tran K."/>
            <person name="Kang K.H."/>
            <person name="Hance I.R."/>
            <person name="Nelson K.E."/>
            <person name="Fraser C.M."/>
        </authorList>
    </citation>
    <scope>NUCLEOTIDE SEQUENCE [LARGE SCALE GENOMIC DNA]</scope>
    <source>
        <strain>COL</strain>
    </source>
</reference>
<keyword id="KW-0067">ATP-binding</keyword>
<keyword id="KW-0175">Coiled coil</keyword>
<keyword id="KW-0233">DNA recombination</keyword>
<keyword id="KW-0235">DNA replication</keyword>
<keyword id="KW-0255">Endonuclease</keyword>
<keyword id="KW-0269">Exonuclease</keyword>
<keyword id="KW-0378">Hydrolase</keyword>
<keyword id="KW-0540">Nuclease</keyword>
<keyword id="KW-0547">Nucleotide-binding</keyword>
<dbReference type="EMBL" id="CP000046">
    <property type="protein sequence ID" value="AAW36631.1"/>
    <property type="molecule type" value="Genomic_DNA"/>
</dbReference>
<dbReference type="RefSeq" id="WP_000803164.1">
    <property type="nucleotide sequence ID" value="NZ_JBGOFO010000002.1"/>
</dbReference>
<dbReference type="SMR" id="Q5HG72"/>
<dbReference type="KEGG" id="sac:SACOL1382"/>
<dbReference type="HOGENOM" id="CLU_004785_2_1_9"/>
<dbReference type="Proteomes" id="UP000000530">
    <property type="component" value="Chromosome"/>
</dbReference>
<dbReference type="GO" id="GO:0005524">
    <property type="term" value="F:ATP binding"/>
    <property type="evidence" value="ECO:0007669"/>
    <property type="project" value="UniProtKB-KW"/>
</dbReference>
<dbReference type="GO" id="GO:0016887">
    <property type="term" value="F:ATP hydrolysis activity"/>
    <property type="evidence" value="ECO:0007669"/>
    <property type="project" value="InterPro"/>
</dbReference>
<dbReference type="GO" id="GO:0004519">
    <property type="term" value="F:endonuclease activity"/>
    <property type="evidence" value="ECO:0007669"/>
    <property type="project" value="UniProtKB-KW"/>
</dbReference>
<dbReference type="GO" id="GO:0004527">
    <property type="term" value="F:exonuclease activity"/>
    <property type="evidence" value="ECO:0007669"/>
    <property type="project" value="UniProtKB-KW"/>
</dbReference>
<dbReference type="GO" id="GO:0006310">
    <property type="term" value="P:DNA recombination"/>
    <property type="evidence" value="ECO:0007669"/>
    <property type="project" value="UniProtKB-KW"/>
</dbReference>
<dbReference type="GO" id="GO:0006260">
    <property type="term" value="P:DNA replication"/>
    <property type="evidence" value="ECO:0007669"/>
    <property type="project" value="UniProtKB-KW"/>
</dbReference>
<dbReference type="GO" id="GO:0006302">
    <property type="term" value="P:double-strand break repair"/>
    <property type="evidence" value="ECO:0007669"/>
    <property type="project" value="InterPro"/>
</dbReference>
<dbReference type="CDD" id="cd03279">
    <property type="entry name" value="ABC_sbcCD"/>
    <property type="match status" value="1"/>
</dbReference>
<dbReference type="Gene3D" id="1.10.287.510">
    <property type="entry name" value="Helix hairpin bin"/>
    <property type="match status" value="1"/>
</dbReference>
<dbReference type="Gene3D" id="3.40.50.300">
    <property type="entry name" value="P-loop containing nucleotide triphosphate hydrolases"/>
    <property type="match status" value="2"/>
</dbReference>
<dbReference type="InterPro" id="IPR027417">
    <property type="entry name" value="P-loop_NTPase"/>
</dbReference>
<dbReference type="InterPro" id="IPR038729">
    <property type="entry name" value="Rad50/SbcC_AAA"/>
</dbReference>
<dbReference type="InterPro" id="IPR053380">
    <property type="entry name" value="SbcCD_Nuclease_C"/>
</dbReference>
<dbReference type="NCBIfam" id="NF041751">
    <property type="entry name" value="sbcc_Staph"/>
    <property type="match status" value="1"/>
</dbReference>
<dbReference type="PANTHER" id="PTHR32114">
    <property type="entry name" value="ABC TRANSPORTER ABCH.3"/>
    <property type="match status" value="1"/>
</dbReference>
<dbReference type="PANTHER" id="PTHR32114:SF2">
    <property type="entry name" value="ABC TRANSPORTER ABCH.3"/>
    <property type="match status" value="1"/>
</dbReference>
<dbReference type="Pfam" id="PF13476">
    <property type="entry name" value="AAA_23"/>
    <property type="match status" value="1"/>
</dbReference>
<dbReference type="Pfam" id="PF13558">
    <property type="entry name" value="SbcC_Walker_B"/>
    <property type="match status" value="1"/>
</dbReference>
<dbReference type="SUPFAM" id="SSF52540">
    <property type="entry name" value="P-loop containing nucleoside triphosphate hydrolases"/>
    <property type="match status" value="1"/>
</dbReference>
<dbReference type="SUPFAM" id="SSF75712">
    <property type="entry name" value="Rad50 coiled-coil Zn hook"/>
    <property type="match status" value="1"/>
</dbReference>
<gene>
    <name type="primary">sbcC</name>
    <name type="ordered locus">SACOL1382</name>
</gene>
<accession>Q5HG72</accession>
<organism>
    <name type="scientific">Staphylococcus aureus (strain COL)</name>
    <dbReference type="NCBI Taxonomy" id="93062"/>
    <lineage>
        <taxon>Bacteria</taxon>
        <taxon>Bacillati</taxon>
        <taxon>Bacillota</taxon>
        <taxon>Bacilli</taxon>
        <taxon>Bacillales</taxon>
        <taxon>Staphylococcaceae</taxon>
        <taxon>Staphylococcus</taxon>
    </lineage>
</organism>
<protein>
    <recommendedName>
        <fullName>Nuclease SbcCD subunit C</fullName>
    </recommendedName>
</protein>
<evidence type="ECO:0000250" key="1"/>
<evidence type="ECO:0000255" key="2"/>
<evidence type="ECO:0000305" key="3"/>